<comment type="catalytic activity">
    <reaction evidence="1">
        <text>tRNA(Arg) + L-arginine + ATP = L-arginyl-tRNA(Arg) + AMP + diphosphate</text>
        <dbReference type="Rhea" id="RHEA:20301"/>
        <dbReference type="Rhea" id="RHEA-COMP:9658"/>
        <dbReference type="Rhea" id="RHEA-COMP:9673"/>
        <dbReference type="ChEBI" id="CHEBI:30616"/>
        <dbReference type="ChEBI" id="CHEBI:32682"/>
        <dbReference type="ChEBI" id="CHEBI:33019"/>
        <dbReference type="ChEBI" id="CHEBI:78442"/>
        <dbReference type="ChEBI" id="CHEBI:78513"/>
        <dbReference type="ChEBI" id="CHEBI:456215"/>
        <dbReference type="EC" id="6.1.1.19"/>
    </reaction>
</comment>
<comment type="subunit">
    <text evidence="1">Monomer.</text>
</comment>
<comment type="subcellular location">
    <subcellularLocation>
        <location evidence="1">Cytoplasm</location>
    </subcellularLocation>
</comment>
<comment type="similarity">
    <text evidence="1">Belongs to the class-I aminoacyl-tRNA synthetase family.</text>
</comment>
<feature type="chain" id="PRO_1000095330" description="Arginine--tRNA ligase">
    <location>
        <begin position="1"/>
        <end position="577"/>
    </location>
</feature>
<feature type="short sequence motif" description="'HIGH' region">
    <location>
        <begin position="122"/>
        <end position="132"/>
    </location>
</feature>
<accession>B6EI57</accession>
<proteinExistence type="inferred from homology"/>
<dbReference type="EC" id="6.1.1.19" evidence="1"/>
<dbReference type="EMBL" id="FM178379">
    <property type="protein sequence ID" value="CAQ79795.1"/>
    <property type="molecule type" value="Genomic_DNA"/>
</dbReference>
<dbReference type="RefSeq" id="WP_012550641.1">
    <property type="nucleotide sequence ID" value="NC_011312.1"/>
</dbReference>
<dbReference type="SMR" id="B6EI57"/>
<dbReference type="KEGG" id="vsa:VSAL_I2110"/>
<dbReference type="eggNOG" id="COG0018">
    <property type="taxonomic scope" value="Bacteria"/>
</dbReference>
<dbReference type="HOGENOM" id="CLU_006406_5_1_6"/>
<dbReference type="Proteomes" id="UP000001730">
    <property type="component" value="Chromosome 1"/>
</dbReference>
<dbReference type="GO" id="GO:0005737">
    <property type="term" value="C:cytoplasm"/>
    <property type="evidence" value="ECO:0007669"/>
    <property type="project" value="UniProtKB-SubCell"/>
</dbReference>
<dbReference type="GO" id="GO:0004814">
    <property type="term" value="F:arginine-tRNA ligase activity"/>
    <property type="evidence" value="ECO:0007669"/>
    <property type="project" value="UniProtKB-UniRule"/>
</dbReference>
<dbReference type="GO" id="GO:0005524">
    <property type="term" value="F:ATP binding"/>
    <property type="evidence" value="ECO:0007669"/>
    <property type="project" value="UniProtKB-UniRule"/>
</dbReference>
<dbReference type="GO" id="GO:0006420">
    <property type="term" value="P:arginyl-tRNA aminoacylation"/>
    <property type="evidence" value="ECO:0007669"/>
    <property type="project" value="UniProtKB-UniRule"/>
</dbReference>
<dbReference type="CDD" id="cd07956">
    <property type="entry name" value="Anticodon_Ia_Arg"/>
    <property type="match status" value="1"/>
</dbReference>
<dbReference type="CDD" id="cd00671">
    <property type="entry name" value="ArgRS_core"/>
    <property type="match status" value="1"/>
</dbReference>
<dbReference type="FunFam" id="1.10.730.10:FF:000001">
    <property type="entry name" value="Arginine--tRNA ligase"/>
    <property type="match status" value="1"/>
</dbReference>
<dbReference type="FunFam" id="3.40.50.620:FF:000030">
    <property type="entry name" value="Arginine--tRNA ligase"/>
    <property type="match status" value="1"/>
</dbReference>
<dbReference type="Gene3D" id="3.30.1360.70">
    <property type="entry name" value="Arginyl tRNA synthetase N-terminal domain"/>
    <property type="match status" value="1"/>
</dbReference>
<dbReference type="Gene3D" id="3.40.50.620">
    <property type="entry name" value="HUPs"/>
    <property type="match status" value="1"/>
</dbReference>
<dbReference type="Gene3D" id="1.10.730.10">
    <property type="entry name" value="Isoleucyl-tRNA Synthetase, Domain 1"/>
    <property type="match status" value="1"/>
</dbReference>
<dbReference type="HAMAP" id="MF_00123">
    <property type="entry name" value="Arg_tRNA_synth"/>
    <property type="match status" value="1"/>
</dbReference>
<dbReference type="InterPro" id="IPR001412">
    <property type="entry name" value="aa-tRNA-synth_I_CS"/>
</dbReference>
<dbReference type="InterPro" id="IPR001278">
    <property type="entry name" value="Arg-tRNA-ligase"/>
</dbReference>
<dbReference type="InterPro" id="IPR005148">
    <property type="entry name" value="Arg-tRNA-synth_N"/>
</dbReference>
<dbReference type="InterPro" id="IPR036695">
    <property type="entry name" value="Arg-tRNA-synth_N_sf"/>
</dbReference>
<dbReference type="InterPro" id="IPR035684">
    <property type="entry name" value="ArgRS_core"/>
</dbReference>
<dbReference type="InterPro" id="IPR008909">
    <property type="entry name" value="DALR_anticod-bd"/>
</dbReference>
<dbReference type="InterPro" id="IPR014729">
    <property type="entry name" value="Rossmann-like_a/b/a_fold"/>
</dbReference>
<dbReference type="InterPro" id="IPR009080">
    <property type="entry name" value="tRNAsynth_Ia_anticodon-bd"/>
</dbReference>
<dbReference type="NCBIfam" id="TIGR00456">
    <property type="entry name" value="argS"/>
    <property type="match status" value="1"/>
</dbReference>
<dbReference type="PANTHER" id="PTHR11956:SF5">
    <property type="entry name" value="ARGININE--TRNA LIGASE, CYTOPLASMIC"/>
    <property type="match status" value="1"/>
</dbReference>
<dbReference type="PANTHER" id="PTHR11956">
    <property type="entry name" value="ARGINYL-TRNA SYNTHETASE"/>
    <property type="match status" value="1"/>
</dbReference>
<dbReference type="Pfam" id="PF03485">
    <property type="entry name" value="Arg_tRNA_synt_N"/>
    <property type="match status" value="1"/>
</dbReference>
<dbReference type="Pfam" id="PF05746">
    <property type="entry name" value="DALR_1"/>
    <property type="match status" value="1"/>
</dbReference>
<dbReference type="Pfam" id="PF00750">
    <property type="entry name" value="tRNA-synt_1d"/>
    <property type="match status" value="1"/>
</dbReference>
<dbReference type="PRINTS" id="PR01038">
    <property type="entry name" value="TRNASYNTHARG"/>
</dbReference>
<dbReference type="SMART" id="SM01016">
    <property type="entry name" value="Arg_tRNA_synt_N"/>
    <property type="match status" value="1"/>
</dbReference>
<dbReference type="SMART" id="SM00836">
    <property type="entry name" value="DALR_1"/>
    <property type="match status" value="1"/>
</dbReference>
<dbReference type="SUPFAM" id="SSF47323">
    <property type="entry name" value="Anticodon-binding domain of a subclass of class I aminoacyl-tRNA synthetases"/>
    <property type="match status" value="1"/>
</dbReference>
<dbReference type="SUPFAM" id="SSF55190">
    <property type="entry name" value="Arginyl-tRNA synthetase (ArgRS), N-terminal 'additional' domain"/>
    <property type="match status" value="1"/>
</dbReference>
<dbReference type="SUPFAM" id="SSF52374">
    <property type="entry name" value="Nucleotidylyl transferase"/>
    <property type="match status" value="1"/>
</dbReference>
<dbReference type="PROSITE" id="PS00178">
    <property type="entry name" value="AA_TRNA_LIGASE_I"/>
    <property type="match status" value="1"/>
</dbReference>
<protein>
    <recommendedName>
        <fullName evidence="1">Arginine--tRNA ligase</fullName>
        <ecNumber evidence="1">6.1.1.19</ecNumber>
    </recommendedName>
    <alternativeName>
        <fullName evidence="1">Arginyl-tRNA synthetase</fullName>
        <shortName evidence="1">ArgRS</shortName>
    </alternativeName>
</protein>
<keyword id="KW-0030">Aminoacyl-tRNA synthetase</keyword>
<keyword id="KW-0067">ATP-binding</keyword>
<keyword id="KW-0963">Cytoplasm</keyword>
<keyword id="KW-0436">Ligase</keyword>
<keyword id="KW-0547">Nucleotide-binding</keyword>
<keyword id="KW-0648">Protein biosynthesis</keyword>
<name>SYR_ALISL</name>
<reference key="1">
    <citation type="journal article" date="2008" name="BMC Genomics">
        <title>The genome sequence of the fish pathogen Aliivibrio salmonicida strain LFI1238 shows extensive evidence of gene decay.</title>
        <authorList>
            <person name="Hjerde E."/>
            <person name="Lorentzen M.S."/>
            <person name="Holden M.T."/>
            <person name="Seeger K."/>
            <person name="Paulsen S."/>
            <person name="Bason N."/>
            <person name="Churcher C."/>
            <person name="Harris D."/>
            <person name="Norbertczak H."/>
            <person name="Quail M.A."/>
            <person name="Sanders S."/>
            <person name="Thurston S."/>
            <person name="Parkhill J."/>
            <person name="Willassen N.P."/>
            <person name="Thomson N.R."/>
        </authorList>
    </citation>
    <scope>NUCLEOTIDE SEQUENCE [LARGE SCALE GENOMIC DNA]</scope>
    <source>
        <strain>LFI1238</strain>
    </source>
</reference>
<organism>
    <name type="scientific">Aliivibrio salmonicida (strain LFI1238)</name>
    <name type="common">Vibrio salmonicida (strain LFI1238)</name>
    <dbReference type="NCBI Taxonomy" id="316275"/>
    <lineage>
        <taxon>Bacteria</taxon>
        <taxon>Pseudomonadati</taxon>
        <taxon>Pseudomonadota</taxon>
        <taxon>Gammaproteobacteria</taxon>
        <taxon>Vibrionales</taxon>
        <taxon>Vibrionaceae</taxon>
        <taxon>Aliivibrio</taxon>
    </lineage>
</organism>
<evidence type="ECO:0000255" key="1">
    <source>
        <dbReference type="HAMAP-Rule" id="MF_00123"/>
    </source>
</evidence>
<sequence length="577" mass="63968">MNIQSLINDKVSQALEAAGAPAGSPAAVRQSAKAQFGDYQANGVMGVAKRLGTNPREFAQKVLDVLDLDGIASKTEIAGPGFINIFLSEEFLAKQAEAALADERLGVALETKQNIVADYSAPNVAKEMHVGHLRSTIIGDAVVRTLEFLGHNVTRANHIGDWGTQFGMLIANLERIQKEKGEVSMELSDLEGFYRESKKLYDEDEEFAVTARGYVVKLQGGDAFCADMWKKLVDVTMVQNQRNYDRLNVSLTRDNVMGESMYNSMLAPIVADLQEKGLAVESDGAQVVYLDEYKNKDGDPMGVIVQKRDGGFLYTTTDIACAKYRFEELNADRVLYFIDSRQHQHLMQAWTIVRKAGYVPESVSLEHHAFGMMLGKDGRPFKTRAGGTVRLADLLDEAEQRAIALIEEKNKDLSTEEKAKIATTVAMAAVKYSDLSKHRTTDYIFDWDNILAFEGNTAPYMQYAYTRVASIFSKADLSMDNLAGEVKITDEKEKALITKLMQFEEAVQAVASEGQPHLMCAYLFELAGQFSSFYEACPILNNDDESIKQSRLKLAALTAKTIKQGLDLLGIETLERM</sequence>
<gene>
    <name evidence="1" type="primary">argS</name>
    <name type="ordered locus">VSAL_I2110</name>
</gene>